<reference key="1">
    <citation type="journal article" date="1987" name="Proc. Natl. Acad. Sci. U.S.A.">
        <title>Bacillus subtilis sucrose-specific enzyme II of the phosphotransferase system: expression in Escherichia coli and homology to enzymes II from enteric bacteria.</title>
        <authorList>
            <person name="Fouet A."/>
            <person name="Arnaud M."/>
            <person name="Klier A."/>
            <person name="Rapoport G."/>
        </authorList>
    </citation>
    <scope>NUCLEOTIDE SEQUENCE [GENOMIC DNA]</scope>
    <scope>FUNCTION</scope>
    <scope>CATALYTIC ACTIVITY</scope>
</reference>
<reference key="2">
    <citation type="journal article" date="1993" name="Mol. Microbiol.">
        <title>Bacillus subtilis genome project: cloning and sequencing of the 97 kb region from 325 degrees to 333 degrees.</title>
        <authorList>
            <person name="Glaser P."/>
            <person name="Kunst F."/>
            <person name="Arnaud M."/>
            <person name="Coudart M.P."/>
            <person name="Gonzales W."/>
            <person name="Hullo M.-F."/>
            <person name="Ionescu M."/>
            <person name="Lubochinsky B."/>
            <person name="Marcelino L."/>
            <person name="Moszer I."/>
            <person name="Presecan E."/>
            <person name="Santana M."/>
            <person name="Schneider E."/>
            <person name="Schweizer J."/>
            <person name="Vertes A."/>
            <person name="Rapoport G."/>
            <person name="Danchin A."/>
        </authorList>
    </citation>
    <scope>NUCLEOTIDE SEQUENCE [GENOMIC DNA]</scope>
    <source>
        <strain>168</strain>
    </source>
</reference>
<reference key="3">
    <citation type="journal article" date="1997" name="Nature">
        <title>The complete genome sequence of the Gram-positive bacterium Bacillus subtilis.</title>
        <authorList>
            <person name="Kunst F."/>
            <person name="Ogasawara N."/>
            <person name="Moszer I."/>
            <person name="Albertini A.M."/>
            <person name="Alloni G."/>
            <person name="Azevedo V."/>
            <person name="Bertero M.G."/>
            <person name="Bessieres P."/>
            <person name="Bolotin A."/>
            <person name="Borchert S."/>
            <person name="Borriss R."/>
            <person name="Boursier L."/>
            <person name="Brans A."/>
            <person name="Braun M."/>
            <person name="Brignell S.C."/>
            <person name="Bron S."/>
            <person name="Brouillet S."/>
            <person name="Bruschi C.V."/>
            <person name="Caldwell B."/>
            <person name="Capuano V."/>
            <person name="Carter N.M."/>
            <person name="Choi S.-K."/>
            <person name="Codani J.-J."/>
            <person name="Connerton I.F."/>
            <person name="Cummings N.J."/>
            <person name="Daniel R.A."/>
            <person name="Denizot F."/>
            <person name="Devine K.M."/>
            <person name="Duesterhoeft A."/>
            <person name="Ehrlich S.D."/>
            <person name="Emmerson P.T."/>
            <person name="Entian K.-D."/>
            <person name="Errington J."/>
            <person name="Fabret C."/>
            <person name="Ferrari E."/>
            <person name="Foulger D."/>
            <person name="Fritz C."/>
            <person name="Fujita M."/>
            <person name="Fujita Y."/>
            <person name="Fuma S."/>
            <person name="Galizzi A."/>
            <person name="Galleron N."/>
            <person name="Ghim S.-Y."/>
            <person name="Glaser P."/>
            <person name="Goffeau A."/>
            <person name="Golightly E.J."/>
            <person name="Grandi G."/>
            <person name="Guiseppi G."/>
            <person name="Guy B.J."/>
            <person name="Haga K."/>
            <person name="Haiech J."/>
            <person name="Harwood C.R."/>
            <person name="Henaut A."/>
            <person name="Hilbert H."/>
            <person name="Holsappel S."/>
            <person name="Hosono S."/>
            <person name="Hullo M.-F."/>
            <person name="Itaya M."/>
            <person name="Jones L.-M."/>
            <person name="Joris B."/>
            <person name="Karamata D."/>
            <person name="Kasahara Y."/>
            <person name="Klaerr-Blanchard M."/>
            <person name="Klein C."/>
            <person name="Kobayashi Y."/>
            <person name="Koetter P."/>
            <person name="Koningstein G."/>
            <person name="Krogh S."/>
            <person name="Kumano M."/>
            <person name="Kurita K."/>
            <person name="Lapidus A."/>
            <person name="Lardinois S."/>
            <person name="Lauber J."/>
            <person name="Lazarevic V."/>
            <person name="Lee S.-M."/>
            <person name="Levine A."/>
            <person name="Liu H."/>
            <person name="Masuda S."/>
            <person name="Mauel C."/>
            <person name="Medigue C."/>
            <person name="Medina N."/>
            <person name="Mellado R.P."/>
            <person name="Mizuno M."/>
            <person name="Moestl D."/>
            <person name="Nakai S."/>
            <person name="Noback M."/>
            <person name="Noone D."/>
            <person name="O'Reilly M."/>
            <person name="Ogawa K."/>
            <person name="Ogiwara A."/>
            <person name="Oudega B."/>
            <person name="Park S.-H."/>
            <person name="Parro V."/>
            <person name="Pohl T.M."/>
            <person name="Portetelle D."/>
            <person name="Porwollik S."/>
            <person name="Prescott A.M."/>
            <person name="Presecan E."/>
            <person name="Pujic P."/>
            <person name="Purnelle B."/>
            <person name="Rapoport G."/>
            <person name="Rey M."/>
            <person name="Reynolds S."/>
            <person name="Rieger M."/>
            <person name="Rivolta C."/>
            <person name="Rocha E."/>
            <person name="Roche B."/>
            <person name="Rose M."/>
            <person name="Sadaie Y."/>
            <person name="Sato T."/>
            <person name="Scanlan E."/>
            <person name="Schleich S."/>
            <person name="Schroeter R."/>
            <person name="Scoffone F."/>
            <person name="Sekiguchi J."/>
            <person name="Sekowska A."/>
            <person name="Seror S.J."/>
            <person name="Serror P."/>
            <person name="Shin B.-S."/>
            <person name="Soldo B."/>
            <person name="Sorokin A."/>
            <person name="Tacconi E."/>
            <person name="Takagi T."/>
            <person name="Takahashi H."/>
            <person name="Takemaru K."/>
            <person name="Takeuchi M."/>
            <person name="Tamakoshi A."/>
            <person name="Tanaka T."/>
            <person name="Terpstra P."/>
            <person name="Tognoni A."/>
            <person name="Tosato V."/>
            <person name="Uchiyama S."/>
            <person name="Vandenbol M."/>
            <person name="Vannier F."/>
            <person name="Vassarotti A."/>
            <person name="Viari A."/>
            <person name="Wambutt R."/>
            <person name="Wedler E."/>
            <person name="Wedler H."/>
            <person name="Weitzenegger T."/>
            <person name="Winters P."/>
            <person name="Wipat A."/>
            <person name="Yamamoto H."/>
            <person name="Yamane K."/>
            <person name="Yasumoto K."/>
            <person name="Yata K."/>
            <person name="Yoshida K."/>
            <person name="Yoshikawa H.-F."/>
            <person name="Zumstein E."/>
            <person name="Yoshikawa H."/>
            <person name="Danchin A."/>
        </authorList>
    </citation>
    <scope>NUCLEOTIDE SEQUENCE [LARGE SCALE GENOMIC DNA]</scope>
    <source>
        <strain>168</strain>
    </source>
</reference>
<reference key="4">
    <citation type="journal article" date="1999" name="Genome Res.">
        <title>Detecting and analyzing DNA sequencing errors: toward a higher quality of the Bacillus subtilis genome sequence.</title>
        <authorList>
            <person name="Medigue C."/>
            <person name="Rose M."/>
            <person name="Viari A."/>
            <person name="Danchin A."/>
        </authorList>
    </citation>
    <scope>SEQUENCE REVISION</scope>
</reference>
<reference key="5">
    <citation type="journal article" date="2009" name="Microbiology">
        <title>From a consortium sequence to a unified sequence: the Bacillus subtilis 168 reference genome a decade later.</title>
        <authorList>
            <person name="Barbe V."/>
            <person name="Cruveiller S."/>
            <person name="Kunst F."/>
            <person name="Lenoble P."/>
            <person name="Meurice G."/>
            <person name="Sekowska A."/>
            <person name="Vallenet D."/>
            <person name="Wang T."/>
            <person name="Moszer I."/>
            <person name="Medigue C."/>
            <person name="Danchin A."/>
        </authorList>
    </citation>
    <scope>SEQUENCE REVISION TO 200 AND 202</scope>
</reference>
<reference key="6">
    <citation type="journal article" date="1990" name="J. Bacteriol.">
        <title>The sacT gene regulating the sacPA operon in Bacillus subtilis shares strong homology with transcriptional antiterminators.</title>
        <authorList>
            <person name="Debarbouille M."/>
            <person name="Arnaud M."/>
            <person name="Fouet A."/>
            <person name="Klier A."/>
            <person name="Rapoport G."/>
        </authorList>
    </citation>
    <scope>INDUCTION</scope>
</reference>
<proteinExistence type="evidence at protein level"/>
<sequence>MDYKETAKRLIELLGGKENIISAAHCATRLRLVMKDESKIDQAQVEELDGVKGAFSSSGQYQIIFGTGLVNKVFDAFSKEADIEREEHVNHQDAAKEKLNPAARFAKTLSNIFVPIIPAIVASGLLMGLLGMINAFHWMSKDSALLQLLDMFSSAAFIFLPILIGVSASKEFGSNPYLGAVIGGIMIHPNLLNPWGLAEATPDYMHLFGFDIALLGYQGTVIPVLLAVYVMSKVEKWTRKVVPHAVDLLVTPFVTVIVTGFVAFIAIGPLGRALGSGITVALTYVYDHAGFVAGLIFGGTYSLIVLTGVHHSFHAIEAGLIADIGKNYLLPIWSMANVAQGGAGLAVFFMAKKAKTKEIALPAAFSAFLGITEPVIFGVNLRYRKPFIAAMIGGALGGAYVVFTHVAANAYGLTGIPMIAIAAPFGFSNLIHYLIGMAIAAVSAFIAAFVMKINEDEERKK</sequence>
<organism>
    <name type="scientific">Bacillus subtilis (strain 168)</name>
    <dbReference type="NCBI Taxonomy" id="224308"/>
    <lineage>
        <taxon>Bacteria</taxon>
        <taxon>Bacillati</taxon>
        <taxon>Bacillota</taxon>
        <taxon>Bacilli</taxon>
        <taxon>Bacillales</taxon>
        <taxon>Bacillaceae</taxon>
        <taxon>Bacillus</taxon>
    </lineage>
</organism>
<evidence type="ECO:0000255" key="1">
    <source>
        <dbReference type="PROSITE-ProRule" id="PRU00421"/>
    </source>
</evidence>
<evidence type="ECO:0000255" key="2">
    <source>
        <dbReference type="PROSITE-ProRule" id="PRU00426"/>
    </source>
</evidence>
<evidence type="ECO:0000269" key="3">
    <source>
    </source>
</evidence>
<evidence type="ECO:0000269" key="4">
    <source>
    </source>
</evidence>
<evidence type="ECO:0000305" key="5"/>
<name>PTSBC_BACSU</name>
<protein>
    <recommendedName>
        <fullName evidence="5">PTS system sucrose-specific EIIBC component</fullName>
    </recommendedName>
    <alternativeName>
        <fullName>EIIBC-Scr</fullName>
        <shortName>EII-Scr</shortName>
    </alternativeName>
    <domain>
        <recommendedName>
            <fullName>Sucrose-specific phosphotransferase enzyme IIB component</fullName>
            <ecNumber evidence="4">2.7.1.211</ecNumber>
        </recommendedName>
        <alternativeName>
            <fullName>PTS system sucrose-specific EIIB component</fullName>
        </alternativeName>
    </domain>
    <domain>
        <recommendedName>
            <fullName>Sucrose permease IIC component</fullName>
        </recommendedName>
        <alternativeName>
            <fullName>PTS system sucrose-specific EIIC component</fullName>
        </alternativeName>
    </domain>
</protein>
<dbReference type="EC" id="2.7.1.211" evidence="4"/>
<dbReference type="EMBL" id="J03006">
    <property type="protein sequence ID" value="AAA22727.1"/>
    <property type="status" value="ALT_FRAME"/>
    <property type="molecule type" value="Genomic_DNA"/>
</dbReference>
<dbReference type="EMBL" id="X73124">
    <property type="protein sequence ID" value="CAA51605.1"/>
    <property type="status" value="ALT_FRAME"/>
    <property type="molecule type" value="Genomic_DNA"/>
</dbReference>
<dbReference type="EMBL" id="AL009126">
    <property type="protein sequence ID" value="CAB15831.3"/>
    <property type="molecule type" value="Genomic_DNA"/>
</dbReference>
<dbReference type="PIR" id="A39938">
    <property type="entry name" value="A39938"/>
</dbReference>
<dbReference type="RefSeq" id="NP_391684.3">
    <property type="nucleotide sequence ID" value="NC_000964.3"/>
</dbReference>
<dbReference type="SMR" id="P05306"/>
<dbReference type="FunCoup" id="P05306">
    <property type="interactions" value="71"/>
</dbReference>
<dbReference type="STRING" id="224308.BSU38050"/>
<dbReference type="TCDB" id="4.A.1.2.9">
    <property type="family name" value="the pts glucose-glucoside (glc) family"/>
</dbReference>
<dbReference type="PaxDb" id="224308-BSU38050"/>
<dbReference type="EnsemblBacteria" id="CAB15831">
    <property type="protein sequence ID" value="CAB15831"/>
    <property type="gene ID" value="BSU_38050"/>
</dbReference>
<dbReference type="GeneID" id="937266"/>
<dbReference type="KEGG" id="bsu:BSU38050"/>
<dbReference type="PATRIC" id="fig|224308.179.peg.4119"/>
<dbReference type="eggNOG" id="COG1263">
    <property type="taxonomic scope" value="Bacteria"/>
</dbReference>
<dbReference type="eggNOG" id="COG1264">
    <property type="taxonomic scope" value="Bacteria"/>
</dbReference>
<dbReference type="InParanoid" id="P05306"/>
<dbReference type="OrthoDB" id="9769191at2"/>
<dbReference type="PhylomeDB" id="P05306"/>
<dbReference type="BioCyc" id="BSUB:BSU38050-MONOMER"/>
<dbReference type="BRENDA" id="2.7.1.211">
    <property type="organism ID" value="658"/>
</dbReference>
<dbReference type="Proteomes" id="UP000001570">
    <property type="component" value="Chromosome"/>
</dbReference>
<dbReference type="GO" id="GO:0005886">
    <property type="term" value="C:plasma membrane"/>
    <property type="evidence" value="ECO:0000318"/>
    <property type="project" value="GO_Central"/>
</dbReference>
<dbReference type="GO" id="GO:0016301">
    <property type="term" value="F:kinase activity"/>
    <property type="evidence" value="ECO:0007669"/>
    <property type="project" value="UniProtKB-KW"/>
</dbReference>
<dbReference type="GO" id="GO:0022878">
    <property type="term" value="F:protein-N(PI)-phosphohistidine-sucrose phosphotransferase system transporter activity"/>
    <property type="evidence" value="ECO:0007669"/>
    <property type="project" value="RHEA"/>
</dbReference>
<dbReference type="GO" id="GO:0090589">
    <property type="term" value="F:protein-phosphocysteine-trehalose phosphotransferase system transporter activity"/>
    <property type="evidence" value="ECO:0000318"/>
    <property type="project" value="GO_Central"/>
</dbReference>
<dbReference type="GO" id="GO:0009401">
    <property type="term" value="P:phosphoenolpyruvate-dependent sugar phosphotransferase system"/>
    <property type="evidence" value="ECO:0000318"/>
    <property type="project" value="GO_Central"/>
</dbReference>
<dbReference type="GO" id="GO:0015771">
    <property type="term" value="P:trehalose transport"/>
    <property type="evidence" value="ECO:0000318"/>
    <property type="project" value="GO_Central"/>
</dbReference>
<dbReference type="CDD" id="cd00212">
    <property type="entry name" value="PTS_IIB_glc"/>
    <property type="match status" value="1"/>
</dbReference>
<dbReference type="FunFam" id="3.30.1360.60:FF:000001">
    <property type="entry name" value="PTS system glucose-specific IIBC component PtsG"/>
    <property type="match status" value="1"/>
</dbReference>
<dbReference type="Gene3D" id="3.30.1360.60">
    <property type="entry name" value="Glucose permease domain IIB"/>
    <property type="match status" value="1"/>
</dbReference>
<dbReference type="InterPro" id="IPR036878">
    <property type="entry name" value="Glu_permease_IIB"/>
</dbReference>
<dbReference type="InterPro" id="IPR018113">
    <property type="entry name" value="PTrfase_EIIB_Cys"/>
</dbReference>
<dbReference type="InterPro" id="IPR003352">
    <property type="entry name" value="PTS_EIIC"/>
</dbReference>
<dbReference type="InterPro" id="IPR013013">
    <property type="entry name" value="PTS_EIIC_1"/>
</dbReference>
<dbReference type="InterPro" id="IPR001996">
    <property type="entry name" value="PTS_IIB_1"/>
</dbReference>
<dbReference type="InterPro" id="IPR010973">
    <property type="entry name" value="PTS_IIBC_sucr"/>
</dbReference>
<dbReference type="InterPro" id="IPR004719">
    <property type="entry name" value="PTS_maltose/Glc_sub_IIC"/>
</dbReference>
<dbReference type="InterPro" id="IPR050558">
    <property type="entry name" value="PTS_Sugar-Specific_Components"/>
</dbReference>
<dbReference type="NCBIfam" id="TIGR00826">
    <property type="entry name" value="EIIB_glc"/>
    <property type="match status" value="1"/>
</dbReference>
<dbReference type="NCBIfam" id="TIGR00852">
    <property type="entry name" value="pts-Glc"/>
    <property type="match status" value="1"/>
</dbReference>
<dbReference type="NCBIfam" id="TIGR01996">
    <property type="entry name" value="PTS-II-BC-sucr"/>
    <property type="match status" value="1"/>
</dbReference>
<dbReference type="PANTHER" id="PTHR30175:SF7">
    <property type="entry name" value="NEGATIVE REGULATOR OF SACY ACTIVITY"/>
    <property type="match status" value="1"/>
</dbReference>
<dbReference type="PANTHER" id="PTHR30175">
    <property type="entry name" value="PHOSPHOTRANSFERASE SYSTEM TRANSPORT PROTEIN"/>
    <property type="match status" value="1"/>
</dbReference>
<dbReference type="Pfam" id="PF00367">
    <property type="entry name" value="PTS_EIIB"/>
    <property type="match status" value="1"/>
</dbReference>
<dbReference type="Pfam" id="PF02378">
    <property type="entry name" value="PTS_EIIC"/>
    <property type="match status" value="1"/>
</dbReference>
<dbReference type="SUPFAM" id="SSF55604">
    <property type="entry name" value="Glucose permease domain IIB"/>
    <property type="match status" value="1"/>
</dbReference>
<dbReference type="PROSITE" id="PS51098">
    <property type="entry name" value="PTS_EIIB_TYPE_1"/>
    <property type="match status" value="1"/>
</dbReference>
<dbReference type="PROSITE" id="PS01035">
    <property type="entry name" value="PTS_EIIB_TYPE_1_CYS"/>
    <property type="match status" value="1"/>
</dbReference>
<dbReference type="PROSITE" id="PS51103">
    <property type="entry name" value="PTS_EIIC_TYPE_1"/>
    <property type="match status" value="1"/>
</dbReference>
<keyword id="KW-1003">Cell membrane</keyword>
<keyword id="KW-0418">Kinase</keyword>
<keyword id="KW-0472">Membrane</keyword>
<keyword id="KW-0598">Phosphotransferase system</keyword>
<keyword id="KW-1185">Reference proteome</keyword>
<keyword id="KW-0762">Sugar transport</keyword>
<keyword id="KW-0808">Transferase</keyword>
<keyword id="KW-0812">Transmembrane</keyword>
<keyword id="KW-1133">Transmembrane helix</keyword>
<keyword id="KW-0813">Transport</keyword>
<accession>P05306</accession>
<feature type="chain" id="PRO_0000186667" description="PTS system sucrose-specific EIIBC component">
    <location>
        <begin position="1"/>
        <end position="461"/>
    </location>
</feature>
<feature type="transmembrane region" description="Helical" evidence="2">
    <location>
        <begin position="112"/>
        <end position="132"/>
    </location>
</feature>
<feature type="transmembrane region" description="Helical" evidence="2">
    <location>
        <begin position="148"/>
        <end position="168"/>
    </location>
</feature>
<feature type="transmembrane region" description="Helical" evidence="2">
    <location>
        <begin position="178"/>
        <end position="198"/>
    </location>
</feature>
<feature type="transmembrane region" description="Helical" evidence="2">
    <location>
        <begin position="208"/>
        <end position="228"/>
    </location>
</feature>
<feature type="transmembrane region" description="Helical" evidence="2">
    <location>
        <begin position="248"/>
        <end position="268"/>
    </location>
</feature>
<feature type="transmembrane region" description="Helical" evidence="2">
    <location>
        <begin position="289"/>
        <end position="309"/>
    </location>
</feature>
<feature type="transmembrane region" description="Helical" evidence="2">
    <location>
        <begin position="329"/>
        <end position="349"/>
    </location>
</feature>
<feature type="transmembrane region" description="Helical" evidence="2">
    <location>
        <begin position="359"/>
        <end position="379"/>
    </location>
</feature>
<feature type="transmembrane region" description="Helical" evidence="2">
    <location>
        <begin position="387"/>
        <end position="407"/>
    </location>
</feature>
<feature type="transmembrane region" description="Helical" evidence="2">
    <location>
        <begin position="430"/>
        <end position="450"/>
    </location>
</feature>
<feature type="domain" description="PTS EIIB type-1" evidence="1">
    <location>
        <begin position="4"/>
        <end position="87"/>
    </location>
</feature>
<feature type="domain" description="PTS EIIC type-1" evidence="2">
    <location>
        <begin position="107"/>
        <end position="461"/>
    </location>
</feature>
<feature type="active site" description="Phosphocysteine intermediate; for EIIB activity" evidence="1">
    <location>
        <position position="26"/>
    </location>
</feature>
<feature type="sequence conflict" description="In Ref. 1; AAA22727 and 2; CAA51605." evidence="5" ref="1 2">
    <original>P</original>
    <variation>D</variation>
    <location>
        <position position="202"/>
    </location>
</feature>
<gene>
    <name type="primary">sacP</name>
    <name type="ordered locus">BSU38050</name>
    <name type="ORF">ipa-49d</name>
</gene>
<comment type="function">
    <text evidence="4">The phosphoenolpyruvate-dependent sugar phosphotransferase system (sugar PTS), a major carbohydrate active transport system, catalyzes the phosphorylation of incoming sugar substrates concomitantly with their translocation across the cell membrane (PubMed:3122206). This system is involved in sucrose transport (PubMed:3122206).</text>
</comment>
<comment type="catalytic activity">
    <reaction evidence="4">
        <text>N(pros)-phospho-L-histidyl-[protein](out) + sucrose = sucrose 6(G)-phosphate(in) + L-histidyl-[protein]</text>
        <dbReference type="Rhea" id="RHEA:49236"/>
        <dbReference type="Rhea" id="RHEA-COMP:9745"/>
        <dbReference type="Rhea" id="RHEA-COMP:9746"/>
        <dbReference type="ChEBI" id="CHEBI:17992"/>
        <dbReference type="ChEBI" id="CHEBI:29979"/>
        <dbReference type="ChEBI" id="CHEBI:64837"/>
        <dbReference type="ChEBI" id="CHEBI:91002"/>
        <dbReference type="EC" id="2.7.1.211"/>
    </reaction>
</comment>
<comment type="subcellular location">
    <subcellularLocation>
        <location evidence="2">Cell membrane</location>
        <topology evidence="2">Multi-pass membrane protein</topology>
    </subcellularLocation>
</comment>
<comment type="induction">
    <text evidence="3">Induced by sucrose (PubMed:2163394). Expression is regulated by the antiterminator SacT (PubMed:2163394).</text>
</comment>
<comment type="domain">
    <text evidence="1">The PTS EIIB type-1 domain is phosphorylated by phospho-EIIA on a cysteinyl residue. Then, it transfers the phosphoryl group to the sugar substrate concomitantly with the sugar uptake processed by the PTS EIIC type-1 domain.</text>
</comment>
<comment type="domain">
    <text evidence="2">The EIIC domain type-1 forms the PTS system translocation channel and contains the specific substrate-binding site.</text>
</comment>
<comment type="sequence caution" evidence="5">
    <conflict type="frameshift">
        <sequence resource="EMBL-CDS" id="AAA22727"/>
    </conflict>
</comment>
<comment type="sequence caution" evidence="5">
    <conflict type="frameshift">
        <sequence resource="EMBL-CDS" id="CAA51605"/>
    </conflict>
</comment>